<comment type="function">
    <text evidence="1">Catalyzes the base-exchange of a guanine (G) residue with the queuine precursor 7-aminomethyl-7-deazaguanine (PreQ1) at position 34 (anticodon wobble position) in tRNAs with GU(N) anticodons (tRNA-Asp, -Asn, -His and -Tyr). Catalysis occurs through a double-displacement mechanism. The nucleophile active site attacks the C1' of nucleotide 34 to detach the guanine base from the RNA, forming a covalent enzyme-RNA intermediate. The proton acceptor active site deprotonates the incoming PreQ1, allowing a nucleophilic attack on the C1' of the ribose to form the product. After dissociation, two additional enzymatic reactions on the tRNA convert PreQ1 to queuine (Q), resulting in the hypermodified nucleoside queuosine (7-(((4,5-cis-dihydroxy-2-cyclopenten-1-yl)amino)methyl)-7-deazaguanosine).</text>
</comment>
<comment type="catalytic activity">
    <reaction evidence="1">
        <text>7-aminomethyl-7-carbaguanine + guanosine(34) in tRNA = 7-aminomethyl-7-carbaguanosine(34) in tRNA + guanine</text>
        <dbReference type="Rhea" id="RHEA:24104"/>
        <dbReference type="Rhea" id="RHEA-COMP:10341"/>
        <dbReference type="Rhea" id="RHEA-COMP:10342"/>
        <dbReference type="ChEBI" id="CHEBI:16235"/>
        <dbReference type="ChEBI" id="CHEBI:58703"/>
        <dbReference type="ChEBI" id="CHEBI:74269"/>
        <dbReference type="ChEBI" id="CHEBI:82833"/>
        <dbReference type="EC" id="2.4.2.29"/>
    </reaction>
</comment>
<comment type="cofactor">
    <cofactor evidence="1">
        <name>Zn(2+)</name>
        <dbReference type="ChEBI" id="CHEBI:29105"/>
    </cofactor>
    <text evidence="1">Binds 1 zinc ion per subunit.</text>
</comment>
<comment type="pathway">
    <text evidence="1">tRNA modification; tRNA-queuosine biosynthesis.</text>
</comment>
<comment type="subunit">
    <text evidence="1">Homodimer. Within each dimer, one monomer is responsible for RNA recognition and catalysis, while the other monomer binds to the replacement base PreQ1.</text>
</comment>
<comment type="similarity">
    <text evidence="1">Belongs to the queuine tRNA-ribosyltransferase family.</text>
</comment>
<feature type="chain" id="PRO_1000198025" description="Queuine tRNA-ribosyltransferase">
    <location>
        <begin position="1"/>
        <end position="380"/>
    </location>
</feature>
<feature type="region of interest" description="RNA binding" evidence="1">
    <location>
        <begin position="251"/>
        <end position="257"/>
    </location>
</feature>
<feature type="region of interest" description="RNA binding; important for wobble base 34 recognition" evidence="1">
    <location>
        <begin position="275"/>
        <end position="279"/>
    </location>
</feature>
<feature type="active site" description="Proton acceptor" evidence="1">
    <location>
        <position position="96"/>
    </location>
</feature>
<feature type="active site" description="Nucleophile" evidence="1">
    <location>
        <position position="270"/>
    </location>
</feature>
<feature type="binding site" evidence="1">
    <location>
        <begin position="96"/>
        <end position="100"/>
    </location>
    <ligand>
        <name>substrate</name>
    </ligand>
</feature>
<feature type="binding site" evidence="1">
    <location>
        <position position="150"/>
    </location>
    <ligand>
        <name>substrate</name>
    </ligand>
</feature>
<feature type="binding site" evidence="1">
    <location>
        <position position="193"/>
    </location>
    <ligand>
        <name>substrate</name>
    </ligand>
</feature>
<feature type="binding site" evidence="1">
    <location>
        <position position="220"/>
    </location>
    <ligand>
        <name>substrate</name>
    </ligand>
</feature>
<feature type="binding site" evidence="1">
    <location>
        <position position="308"/>
    </location>
    <ligand>
        <name>Zn(2+)</name>
        <dbReference type="ChEBI" id="CHEBI:29105"/>
    </ligand>
</feature>
<feature type="binding site" evidence="1">
    <location>
        <position position="310"/>
    </location>
    <ligand>
        <name>Zn(2+)</name>
        <dbReference type="ChEBI" id="CHEBI:29105"/>
    </ligand>
</feature>
<feature type="binding site" evidence="1">
    <location>
        <position position="313"/>
    </location>
    <ligand>
        <name>Zn(2+)</name>
        <dbReference type="ChEBI" id="CHEBI:29105"/>
    </ligand>
</feature>
<feature type="binding site" evidence="1">
    <location>
        <position position="339"/>
    </location>
    <ligand>
        <name>Zn(2+)</name>
        <dbReference type="ChEBI" id="CHEBI:29105"/>
    </ligand>
</feature>
<evidence type="ECO:0000255" key="1">
    <source>
        <dbReference type="HAMAP-Rule" id="MF_00168"/>
    </source>
</evidence>
<gene>
    <name evidence="1" type="primary">tgt</name>
    <name type="ordered locus">SEQ_0259</name>
</gene>
<accession>C0MAH5</accession>
<sequence length="380" mass="43034">MTNYPITYRLIKKEKHTGARLGEIITPHGTFPTPMFMPVGTQATVKTQSPEELKEIGSGIILSNTYHLWLRPGDELIARAGGLHKFMNWDQAILTDSGGFQVYSLADSRNITEEGVTFKNHLNGSKMFLSPEKAISIQNNLGSDIMMSFDECPQFYQPYDYVKKSIERTSRWAERGLKAHRRPHDQGLFGIVQGAGFEDLRRQSAADLVSMDFPGYSIGGLAVGESHAEMNAVLDFTTPLLPENKPRYLMGVGAPDSLIDGVIRGVDMFDCVLPTRIARNGTCMTSEGRLVVKNAKFAEDFTPLDHHCDCYTCQHYTRAYLRHLLKADETFGMRLTSYHNLYFLVNLMKQVRQAILDDNLLEFRQDFLERYGYNSSSRNF</sequence>
<organism>
    <name type="scientific">Streptococcus equi subsp. equi (strain 4047)</name>
    <dbReference type="NCBI Taxonomy" id="553482"/>
    <lineage>
        <taxon>Bacteria</taxon>
        <taxon>Bacillati</taxon>
        <taxon>Bacillota</taxon>
        <taxon>Bacilli</taxon>
        <taxon>Lactobacillales</taxon>
        <taxon>Streptococcaceae</taxon>
        <taxon>Streptococcus</taxon>
    </lineage>
</organism>
<proteinExistence type="inferred from homology"/>
<keyword id="KW-0328">Glycosyltransferase</keyword>
<keyword id="KW-0479">Metal-binding</keyword>
<keyword id="KW-0671">Queuosine biosynthesis</keyword>
<keyword id="KW-0808">Transferase</keyword>
<keyword id="KW-0819">tRNA processing</keyword>
<keyword id="KW-0862">Zinc</keyword>
<protein>
    <recommendedName>
        <fullName evidence="1">Queuine tRNA-ribosyltransferase</fullName>
        <ecNumber evidence="1">2.4.2.29</ecNumber>
    </recommendedName>
    <alternativeName>
        <fullName evidence="1">Guanine insertion enzyme</fullName>
    </alternativeName>
    <alternativeName>
        <fullName evidence="1">tRNA-guanine transglycosylase</fullName>
    </alternativeName>
</protein>
<reference key="1">
    <citation type="journal article" date="2009" name="PLoS Pathog.">
        <title>Genomic evidence for the evolution of Streptococcus equi: host restriction, increased virulence, and genetic exchange with human pathogens.</title>
        <authorList>
            <person name="Holden M.T.G."/>
            <person name="Heather Z."/>
            <person name="Paillot R."/>
            <person name="Steward K.F."/>
            <person name="Webb K."/>
            <person name="Ainslie F."/>
            <person name="Jourdan T."/>
            <person name="Bason N.C."/>
            <person name="Holroyd N.E."/>
            <person name="Mungall K."/>
            <person name="Quail M.A."/>
            <person name="Sanders M."/>
            <person name="Simmonds M."/>
            <person name="Willey D."/>
            <person name="Brooks K."/>
            <person name="Aanensen D.M."/>
            <person name="Spratt B.G."/>
            <person name="Jolley K.A."/>
            <person name="Maiden M.C.J."/>
            <person name="Kehoe M."/>
            <person name="Chanter N."/>
            <person name="Bentley S.D."/>
            <person name="Robinson C."/>
            <person name="Maskell D.J."/>
            <person name="Parkhill J."/>
            <person name="Waller A.S."/>
        </authorList>
    </citation>
    <scope>NUCLEOTIDE SEQUENCE [LARGE SCALE GENOMIC DNA]</scope>
    <source>
        <strain>4047</strain>
    </source>
</reference>
<dbReference type="EC" id="2.4.2.29" evidence="1"/>
<dbReference type="EMBL" id="FM204883">
    <property type="protein sequence ID" value="CAW92315.1"/>
    <property type="molecule type" value="Genomic_DNA"/>
</dbReference>
<dbReference type="RefSeq" id="WP_012678931.1">
    <property type="nucleotide sequence ID" value="NC_012471.1"/>
</dbReference>
<dbReference type="SMR" id="C0MAH5"/>
<dbReference type="KEGG" id="seu:SEQ_0259"/>
<dbReference type="HOGENOM" id="CLU_022060_0_1_9"/>
<dbReference type="OrthoDB" id="9805417at2"/>
<dbReference type="UniPathway" id="UPA00392"/>
<dbReference type="Proteomes" id="UP000001365">
    <property type="component" value="Chromosome"/>
</dbReference>
<dbReference type="GO" id="GO:0005829">
    <property type="term" value="C:cytosol"/>
    <property type="evidence" value="ECO:0007669"/>
    <property type="project" value="TreeGrafter"/>
</dbReference>
<dbReference type="GO" id="GO:0046872">
    <property type="term" value="F:metal ion binding"/>
    <property type="evidence" value="ECO:0007669"/>
    <property type="project" value="UniProtKB-KW"/>
</dbReference>
<dbReference type="GO" id="GO:0008479">
    <property type="term" value="F:tRNA-guanosine(34) queuine transglycosylase activity"/>
    <property type="evidence" value="ECO:0007669"/>
    <property type="project" value="UniProtKB-UniRule"/>
</dbReference>
<dbReference type="GO" id="GO:0008616">
    <property type="term" value="P:queuosine biosynthetic process"/>
    <property type="evidence" value="ECO:0007669"/>
    <property type="project" value="UniProtKB-UniRule"/>
</dbReference>
<dbReference type="GO" id="GO:0002099">
    <property type="term" value="P:tRNA wobble guanine modification"/>
    <property type="evidence" value="ECO:0007669"/>
    <property type="project" value="TreeGrafter"/>
</dbReference>
<dbReference type="GO" id="GO:0101030">
    <property type="term" value="P:tRNA-guanine transglycosylation"/>
    <property type="evidence" value="ECO:0007669"/>
    <property type="project" value="InterPro"/>
</dbReference>
<dbReference type="FunFam" id="3.20.20.105:FF:000001">
    <property type="entry name" value="Queuine tRNA-ribosyltransferase"/>
    <property type="match status" value="1"/>
</dbReference>
<dbReference type="Gene3D" id="3.20.20.105">
    <property type="entry name" value="Queuine tRNA-ribosyltransferase-like"/>
    <property type="match status" value="1"/>
</dbReference>
<dbReference type="HAMAP" id="MF_00168">
    <property type="entry name" value="Q_tRNA_Tgt"/>
    <property type="match status" value="1"/>
</dbReference>
<dbReference type="InterPro" id="IPR050076">
    <property type="entry name" value="ArchSynthase1/Queuine_TRR"/>
</dbReference>
<dbReference type="InterPro" id="IPR004803">
    <property type="entry name" value="TGT"/>
</dbReference>
<dbReference type="InterPro" id="IPR036511">
    <property type="entry name" value="TGT-like_sf"/>
</dbReference>
<dbReference type="InterPro" id="IPR002616">
    <property type="entry name" value="tRNA_ribo_trans-like"/>
</dbReference>
<dbReference type="NCBIfam" id="TIGR00430">
    <property type="entry name" value="Q_tRNA_tgt"/>
    <property type="match status" value="1"/>
</dbReference>
<dbReference type="NCBIfam" id="TIGR00449">
    <property type="entry name" value="tgt_general"/>
    <property type="match status" value="1"/>
</dbReference>
<dbReference type="PANTHER" id="PTHR46499">
    <property type="entry name" value="QUEUINE TRNA-RIBOSYLTRANSFERASE"/>
    <property type="match status" value="1"/>
</dbReference>
<dbReference type="PANTHER" id="PTHR46499:SF1">
    <property type="entry name" value="QUEUINE TRNA-RIBOSYLTRANSFERASE"/>
    <property type="match status" value="1"/>
</dbReference>
<dbReference type="Pfam" id="PF01702">
    <property type="entry name" value="TGT"/>
    <property type="match status" value="1"/>
</dbReference>
<dbReference type="SUPFAM" id="SSF51713">
    <property type="entry name" value="tRNA-guanine transglycosylase"/>
    <property type="match status" value="1"/>
</dbReference>
<name>TGT_STRE4</name>